<accession>A1AWA1</accession>
<proteinExistence type="inferred from homology"/>
<reference key="1">
    <citation type="journal article" date="2007" name="Science">
        <title>The Calyptogena magnifica chemoautotrophic symbiont genome.</title>
        <authorList>
            <person name="Newton I.L.G."/>
            <person name="Woyke T."/>
            <person name="Auchtung T.A."/>
            <person name="Dilly G.F."/>
            <person name="Dutton R.J."/>
            <person name="Fisher M.C."/>
            <person name="Fontanez K.M."/>
            <person name="Lau E."/>
            <person name="Stewart F.J."/>
            <person name="Richardson P.M."/>
            <person name="Barry K.W."/>
            <person name="Saunders E."/>
            <person name="Detter J.C."/>
            <person name="Wu D."/>
            <person name="Eisen J.A."/>
            <person name="Cavanaugh C.M."/>
        </authorList>
    </citation>
    <scope>NUCLEOTIDE SEQUENCE [LARGE SCALE GENOMIC DNA]</scope>
</reference>
<keyword id="KW-0028">Amino-acid biosynthesis</keyword>
<keyword id="KW-0100">Branched-chain amino acid biosynthesis</keyword>
<keyword id="KW-0963">Cytoplasm</keyword>
<keyword id="KW-0432">Leucine biosynthesis</keyword>
<keyword id="KW-0464">Manganese</keyword>
<keyword id="KW-0479">Metal-binding</keyword>
<keyword id="KW-0808">Transferase</keyword>
<feature type="chain" id="PRO_1000149262" description="2-isopropylmalate synthase">
    <location>
        <begin position="1"/>
        <end position="511"/>
    </location>
</feature>
<feature type="domain" description="Pyruvate carboxyltransferase" evidence="1">
    <location>
        <begin position="5"/>
        <end position="267"/>
    </location>
</feature>
<feature type="region of interest" description="Regulatory domain" evidence="1">
    <location>
        <begin position="392"/>
        <end position="511"/>
    </location>
</feature>
<feature type="binding site" evidence="1">
    <location>
        <position position="14"/>
    </location>
    <ligand>
        <name>Mn(2+)</name>
        <dbReference type="ChEBI" id="CHEBI:29035"/>
    </ligand>
</feature>
<feature type="binding site" evidence="1">
    <location>
        <position position="202"/>
    </location>
    <ligand>
        <name>Mn(2+)</name>
        <dbReference type="ChEBI" id="CHEBI:29035"/>
    </ligand>
</feature>
<feature type="binding site" evidence="1">
    <location>
        <position position="204"/>
    </location>
    <ligand>
        <name>Mn(2+)</name>
        <dbReference type="ChEBI" id="CHEBI:29035"/>
    </ligand>
</feature>
<feature type="binding site" evidence="1">
    <location>
        <position position="238"/>
    </location>
    <ligand>
        <name>Mn(2+)</name>
        <dbReference type="ChEBI" id="CHEBI:29035"/>
    </ligand>
</feature>
<name>LEU1_RUTMC</name>
<evidence type="ECO:0000255" key="1">
    <source>
        <dbReference type="HAMAP-Rule" id="MF_01025"/>
    </source>
</evidence>
<organism>
    <name type="scientific">Ruthia magnifica subsp. Calyptogena magnifica</name>
    <dbReference type="NCBI Taxonomy" id="413404"/>
    <lineage>
        <taxon>Bacteria</taxon>
        <taxon>Pseudomonadati</taxon>
        <taxon>Pseudomonadota</taxon>
        <taxon>Gammaproteobacteria</taxon>
        <taxon>Candidatus Pseudothioglobaceae</taxon>
        <taxon>Candidatus Ruthturnera</taxon>
    </lineage>
</organism>
<sequence>MPNKLIIFDTTLRDGEQSPGASMTRDEKVRIAKVLEKMQVDVIEAGFAIASVGDFEAVQTVANVVQDSIICSLSRALDKDIDCAGEALKGANASRIHTFIATSDIHMKMKLQMTPDQVVEQAVRAVKRAKRYTNDVEFSPEDAGRSDEDFLCRIIEATINAGATTINIPDTVGYNIPHQFGVTIKSLIGRVPNSDKAIFSAHCHNDLGLAVANSLSAVLNGARQVECTINGLGERAGNTSLEELVMAVRTRQDIFDCDTDINATHILSASRLVSSVTGFIVQPNKAIVGANAFAHEAGIHQDGVIKYRETYEIMRAEDVGWNANQLVLGKHSGRNAFKVRLAELGVEFNNEEGLNDAFRRFKELADKKHEIFDEDLQALVSETQTEAYEAIKLVSLKVCTETGEKNTATVVLSIDDKEQTATANTSGAVDATFIAISSLTGIKINLQLYSVSNVTQGTDALGEVNVRLECNGRIVNGQGVDTDIITASAKAYVHGLNKVLAATNKAQHPQI</sequence>
<comment type="function">
    <text evidence="1">Catalyzes the condensation of the acetyl group of acetyl-CoA with 3-methyl-2-oxobutanoate (2-ketoisovalerate) to form 3-carboxy-3-hydroxy-4-methylpentanoate (2-isopropylmalate).</text>
</comment>
<comment type="catalytic activity">
    <reaction evidence="1">
        <text>3-methyl-2-oxobutanoate + acetyl-CoA + H2O = (2S)-2-isopropylmalate + CoA + H(+)</text>
        <dbReference type="Rhea" id="RHEA:21524"/>
        <dbReference type="ChEBI" id="CHEBI:1178"/>
        <dbReference type="ChEBI" id="CHEBI:11851"/>
        <dbReference type="ChEBI" id="CHEBI:15377"/>
        <dbReference type="ChEBI" id="CHEBI:15378"/>
        <dbReference type="ChEBI" id="CHEBI:57287"/>
        <dbReference type="ChEBI" id="CHEBI:57288"/>
        <dbReference type="EC" id="2.3.3.13"/>
    </reaction>
</comment>
<comment type="cofactor">
    <cofactor evidence="1">
        <name>Mn(2+)</name>
        <dbReference type="ChEBI" id="CHEBI:29035"/>
    </cofactor>
</comment>
<comment type="pathway">
    <text evidence="1">Amino-acid biosynthesis; L-leucine biosynthesis; L-leucine from 3-methyl-2-oxobutanoate: step 1/4.</text>
</comment>
<comment type="subunit">
    <text evidence="1">Homodimer.</text>
</comment>
<comment type="subcellular location">
    <subcellularLocation>
        <location evidence="1">Cytoplasm</location>
    </subcellularLocation>
</comment>
<comment type="similarity">
    <text evidence="1">Belongs to the alpha-IPM synthase/homocitrate synthase family. LeuA type 1 subfamily.</text>
</comment>
<protein>
    <recommendedName>
        <fullName evidence="1">2-isopropylmalate synthase</fullName>
        <ecNumber evidence="1">2.3.3.13</ecNumber>
    </recommendedName>
    <alternativeName>
        <fullName evidence="1">Alpha-IPM synthase</fullName>
    </alternativeName>
    <alternativeName>
        <fullName evidence="1">Alpha-isopropylmalate synthase</fullName>
    </alternativeName>
</protein>
<dbReference type="EC" id="2.3.3.13" evidence="1"/>
<dbReference type="EMBL" id="CP000488">
    <property type="protein sequence ID" value="ABL02208.1"/>
    <property type="molecule type" value="Genomic_DNA"/>
</dbReference>
<dbReference type="RefSeq" id="WP_011737833.1">
    <property type="nucleotide sequence ID" value="NC_008610.1"/>
</dbReference>
<dbReference type="SMR" id="A1AWA1"/>
<dbReference type="STRING" id="413404.Rmag_0449"/>
<dbReference type="KEGG" id="rma:Rmag_0449"/>
<dbReference type="eggNOG" id="COG0119">
    <property type="taxonomic scope" value="Bacteria"/>
</dbReference>
<dbReference type="HOGENOM" id="CLU_022158_0_1_6"/>
<dbReference type="OrthoDB" id="9803573at2"/>
<dbReference type="UniPathway" id="UPA00048">
    <property type="reaction ID" value="UER00070"/>
</dbReference>
<dbReference type="Proteomes" id="UP000002587">
    <property type="component" value="Chromosome"/>
</dbReference>
<dbReference type="GO" id="GO:0005829">
    <property type="term" value="C:cytosol"/>
    <property type="evidence" value="ECO:0007669"/>
    <property type="project" value="TreeGrafter"/>
</dbReference>
<dbReference type="GO" id="GO:0003852">
    <property type="term" value="F:2-isopropylmalate synthase activity"/>
    <property type="evidence" value="ECO:0007669"/>
    <property type="project" value="UniProtKB-UniRule"/>
</dbReference>
<dbReference type="GO" id="GO:0003985">
    <property type="term" value="F:acetyl-CoA C-acetyltransferase activity"/>
    <property type="evidence" value="ECO:0007669"/>
    <property type="project" value="UniProtKB-UniRule"/>
</dbReference>
<dbReference type="GO" id="GO:0030145">
    <property type="term" value="F:manganese ion binding"/>
    <property type="evidence" value="ECO:0007669"/>
    <property type="project" value="UniProtKB-UniRule"/>
</dbReference>
<dbReference type="GO" id="GO:0009098">
    <property type="term" value="P:L-leucine biosynthetic process"/>
    <property type="evidence" value="ECO:0007669"/>
    <property type="project" value="UniProtKB-UniRule"/>
</dbReference>
<dbReference type="CDD" id="cd07940">
    <property type="entry name" value="DRE_TIM_IPMS"/>
    <property type="match status" value="1"/>
</dbReference>
<dbReference type="FunFam" id="1.10.238.260:FF:000001">
    <property type="entry name" value="2-isopropylmalate synthase"/>
    <property type="match status" value="1"/>
</dbReference>
<dbReference type="FunFam" id="3.20.20.70:FF:000010">
    <property type="entry name" value="2-isopropylmalate synthase"/>
    <property type="match status" value="1"/>
</dbReference>
<dbReference type="FunFam" id="3.30.160.270:FF:000003">
    <property type="entry name" value="2-isopropylmalate synthase"/>
    <property type="match status" value="1"/>
</dbReference>
<dbReference type="Gene3D" id="3.30.160.270">
    <property type="match status" value="1"/>
</dbReference>
<dbReference type="Gene3D" id="3.20.20.70">
    <property type="entry name" value="Aldolase class I"/>
    <property type="match status" value="1"/>
</dbReference>
<dbReference type="HAMAP" id="MF_01025">
    <property type="entry name" value="LeuA_type1"/>
    <property type="match status" value="1"/>
</dbReference>
<dbReference type="InterPro" id="IPR050073">
    <property type="entry name" value="2-IPM_HCS-like"/>
</dbReference>
<dbReference type="InterPro" id="IPR013709">
    <property type="entry name" value="2-isopropylmalate_synth_dimer"/>
</dbReference>
<dbReference type="InterPro" id="IPR002034">
    <property type="entry name" value="AIPM/Hcit_synth_CS"/>
</dbReference>
<dbReference type="InterPro" id="IPR013785">
    <property type="entry name" value="Aldolase_TIM"/>
</dbReference>
<dbReference type="InterPro" id="IPR054691">
    <property type="entry name" value="LeuA/HCS_post-cat"/>
</dbReference>
<dbReference type="InterPro" id="IPR036230">
    <property type="entry name" value="LeuA_allosteric_dom_sf"/>
</dbReference>
<dbReference type="InterPro" id="IPR005671">
    <property type="entry name" value="LeuA_bact_synth"/>
</dbReference>
<dbReference type="InterPro" id="IPR000891">
    <property type="entry name" value="PYR_CT"/>
</dbReference>
<dbReference type="NCBIfam" id="TIGR00973">
    <property type="entry name" value="leuA_bact"/>
    <property type="match status" value="1"/>
</dbReference>
<dbReference type="NCBIfam" id="NF002086">
    <property type="entry name" value="PRK00915.1-3"/>
    <property type="match status" value="1"/>
</dbReference>
<dbReference type="NCBIfam" id="NF002087">
    <property type="entry name" value="PRK00915.1-4"/>
    <property type="match status" value="1"/>
</dbReference>
<dbReference type="PANTHER" id="PTHR10277:SF9">
    <property type="entry name" value="2-ISOPROPYLMALATE SYNTHASE 1, CHLOROPLASTIC-RELATED"/>
    <property type="match status" value="1"/>
</dbReference>
<dbReference type="PANTHER" id="PTHR10277">
    <property type="entry name" value="HOMOCITRATE SYNTHASE-RELATED"/>
    <property type="match status" value="1"/>
</dbReference>
<dbReference type="Pfam" id="PF22617">
    <property type="entry name" value="HCS_D2"/>
    <property type="match status" value="1"/>
</dbReference>
<dbReference type="Pfam" id="PF00682">
    <property type="entry name" value="HMGL-like"/>
    <property type="match status" value="1"/>
</dbReference>
<dbReference type="Pfam" id="PF08502">
    <property type="entry name" value="LeuA_dimer"/>
    <property type="match status" value="1"/>
</dbReference>
<dbReference type="SMART" id="SM00917">
    <property type="entry name" value="LeuA_dimer"/>
    <property type="match status" value="1"/>
</dbReference>
<dbReference type="SUPFAM" id="SSF110921">
    <property type="entry name" value="2-isopropylmalate synthase LeuA, allosteric (dimerisation) domain"/>
    <property type="match status" value="1"/>
</dbReference>
<dbReference type="SUPFAM" id="SSF51569">
    <property type="entry name" value="Aldolase"/>
    <property type="match status" value="1"/>
</dbReference>
<dbReference type="PROSITE" id="PS00815">
    <property type="entry name" value="AIPM_HOMOCIT_SYNTH_1"/>
    <property type="match status" value="1"/>
</dbReference>
<dbReference type="PROSITE" id="PS00816">
    <property type="entry name" value="AIPM_HOMOCIT_SYNTH_2"/>
    <property type="match status" value="1"/>
</dbReference>
<dbReference type="PROSITE" id="PS50991">
    <property type="entry name" value="PYR_CT"/>
    <property type="match status" value="1"/>
</dbReference>
<gene>
    <name evidence="1" type="primary">leuA</name>
    <name type="ordered locus">Rmag_0449</name>
</gene>